<proteinExistence type="evidence at protein level"/>
<organismHost>
    <name type="scientific">Capra hircus</name>
    <name type="common">Goat</name>
    <dbReference type="NCBI Taxonomy" id="9925"/>
</organismHost>
<organismHost>
    <name type="scientific">Ovis aries</name>
    <name type="common">Sheep</name>
    <dbReference type="NCBI Taxonomy" id="9940"/>
</organismHost>
<reference key="1">
    <citation type="submission" date="2002-12" db="EMBL/GenBank/DDBJ databases">
        <authorList>
            <person name="Barrett T."/>
        </authorList>
    </citation>
    <scope>NUCLEOTIDE SEQUENCE [MRNA]</scope>
    <source>
        <strain>Vaccine strain Nigeria/75/1</strain>
    </source>
</reference>
<reference key="2">
    <citation type="submission" date="2005-01" db="EMBL/GenBank/DDBJ databases">
        <title>Full genome sequence of Peste des Petits Ruminants virus, vaccine strain Nigeria 75/1.</title>
        <authorList>
            <person name="Berhe G."/>
            <person name="Yami M."/>
            <person name="Minet C."/>
            <person name="Libeau G."/>
            <person name="Haffar A."/>
            <person name="Meyer G."/>
            <person name="Caufour P."/>
            <person name="Albina E."/>
            <person name="Diallo A."/>
        </authorList>
    </citation>
    <scope>NUCLEOTIDE SEQUENCE [GENOMIC RNA]</scope>
    <source>
        <strain>Vaccine strain Nigeria/75/1</strain>
    </source>
</reference>
<reference key="3">
    <citation type="submission" date="2010-08" db="EMBL/GenBank/DDBJ databases">
        <title>Rescue of Peste-des-petits-ruminants virus from cDNA transfection in Vero cells.</title>
        <authorList>
            <person name="Chen W."/>
            <person name="Bu Z."/>
            <person name="Hu Q."/>
            <person name="Qu L."/>
        </authorList>
    </citation>
    <scope>NUCLEOTIDE SEQUENCE [GENOMIC RNA]</scope>
    <source>
        <strain>Vaccine strain Nigeria/75/1</strain>
    </source>
</reference>
<reference key="4">
    <citation type="submission" date="2017-02" db="EMBL/GenBank/DDBJ databases">
        <title>Quality control and corrected full genome sequence for PPR vaccine seed Nigeria 75/1.</title>
        <authorList>
            <person name="Kwiatek O."/>
            <person name="Bataille A."/>
            <person name="Albina E."/>
            <person name="Libeau G."/>
        </authorList>
    </citation>
    <scope>NUCLEOTIDE SEQUENCE [GENOMIC RNA]</scope>
    <source>
        <strain>Vaccine strain Nigeria/75/1</strain>
    </source>
</reference>
<reference key="5">
    <citation type="journal article" date="2022" name="Microbiol. Spectr.">
        <title>Free ISG15 Inhibits the Replication of Peste des Petits Ruminants Virus by Breaking the Interaction of Nucleoprotein and Phosphoprotein.</title>
        <authorList>
            <person name="Tang J."/>
            <person name="Tang A."/>
            <person name="Jia N."/>
            <person name="Du H."/>
            <person name="Liu C."/>
            <person name="Zhu J."/>
            <person name="Li C."/>
            <person name="Meng C."/>
            <person name="Liu G."/>
        </authorList>
    </citation>
    <scope>INTERACTION WITH THE NUCLEOPROTEIN</scope>
    <scope>INTERACTION WITH HOST ISG15</scope>
    <source>
        <strain>vaccine strain Nigeria 75/1</strain>
    </source>
</reference>
<reference evidence="8" key="6">
    <citation type="submission" date="2016-09" db="PDB data bank">
        <title>Solution structure of the X domain of Peste des Petits Ruminants Virus phosphoprotein and interaction with the nucleoprotein.</title>
        <authorList>
            <person name="Pereira N."/>
            <person name="Basbous N."/>
            <person name="Piuzzi M."/>
            <person name="Bontems F."/>
            <person name="Eleouet J.-F."/>
            <person name="Sizun C."/>
        </authorList>
    </citation>
    <scope>STRUCTURE BY NMR OF 459-509</scope>
</reference>
<gene>
    <name type="primary">P/V</name>
    <name type="synonym">P</name>
</gene>
<evidence type="ECO:0000250" key="1">
    <source>
        <dbReference type="UniProtKB" id="P04859"/>
    </source>
</evidence>
<evidence type="ECO:0000250" key="2">
    <source>
        <dbReference type="UniProtKB" id="P06162"/>
    </source>
</evidence>
<evidence type="ECO:0000250" key="3">
    <source>
        <dbReference type="UniProtKB" id="Q03335"/>
    </source>
</evidence>
<evidence type="ECO:0000250" key="4">
    <source>
        <dbReference type="UniProtKB" id="Q77M42"/>
    </source>
</evidence>
<evidence type="ECO:0000256" key="5">
    <source>
        <dbReference type="SAM" id="MobiDB-lite"/>
    </source>
</evidence>
<evidence type="ECO:0000269" key="6">
    <source>
    </source>
</evidence>
<evidence type="ECO:0000305" key="7"/>
<evidence type="ECO:0007744" key="8">
    <source>
        <dbReference type="PDB" id="5LXJ"/>
    </source>
</evidence>
<evidence type="ECO:0007829" key="9">
    <source>
        <dbReference type="PDB" id="5LXJ"/>
    </source>
</evidence>
<keyword id="KW-0002">3D-structure</keyword>
<keyword id="KW-0597">Phosphoprotein</keyword>
<keyword id="KW-1185">Reference proteome</keyword>
<keyword id="KW-0691">RNA editing</keyword>
<keyword id="KW-0693">Viral RNA replication</keyword>
<dbReference type="EMBL" id="AJ298897">
    <property type="protein sequence ID" value="CAC40614.2"/>
    <property type="molecule type" value="mRNA"/>
</dbReference>
<dbReference type="EMBL" id="X74443">
    <property type="protein sequence ID" value="CAJ01695.1"/>
    <property type="molecule type" value="Genomic_RNA"/>
</dbReference>
<dbReference type="EMBL" id="HQ197753">
    <property type="protein sequence ID" value="ADX95990.1"/>
    <property type="molecule type" value="Viral_cRNA"/>
</dbReference>
<dbReference type="EMBL" id="KY628761">
    <property type="protein sequence ID" value="AUP34035.1"/>
    <property type="molecule type" value="Viral_cRNA"/>
</dbReference>
<dbReference type="PDB" id="5LXJ">
    <property type="method" value="NMR"/>
    <property type="chains" value="A=459-509"/>
</dbReference>
<dbReference type="PDBsum" id="5LXJ"/>
<dbReference type="BMRB" id="Q91QS4"/>
<dbReference type="SMR" id="Q91QS4"/>
<dbReference type="Proteomes" id="UP000174307">
    <property type="component" value="Genome"/>
</dbReference>
<dbReference type="Proteomes" id="UP000180906">
    <property type="component" value="Genome"/>
</dbReference>
<dbReference type="GO" id="GO:0003723">
    <property type="term" value="F:RNA binding"/>
    <property type="evidence" value="ECO:0007669"/>
    <property type="project" value="InterPro"/>
</dbReference>
<dbReference type="GO" id="GO:0003968">
    <property type="term" value="F:RNA-directed RNA polymerase activity"/>
    <property type="evidence" value="ECO:0007669"/>
    <property type="project" value="InterPro"/>
</dbReference>
<dbReference type="GO" id="GO:0006351">
    <property type="term" value="P:DNA-templated transcription"/>
    <property type="evidence" value="ECO:0007669"/>
    <property type="project" value="InterPro"/>
</dbReference>
<dbReference type="GO" id="GO:0019079">
    <property type="term" value="P:viral genome replication"/>
    <property type="evidence" value="ECO:0007669"/>
    <property type="project" value="InterPro"/>
</dbReference>
<dbReference type="CDD" id="cd21031">
    <property type="entry name" value="MEV_P-protein-C_like"/>
    <property type="match status" value="1"/>
</dbReference>
<dbReference type="Gene3D" id="1.20.5.110">
    <property type="match status" value="1"/>
</dbReference>
<dbReference type="Gene3D" id="1.10.8.10">
    <property type="entry name" value="DNA helicase RuvA subunit, C-terminal domain"/>
    <property type="match status" value="1"/>
</dbReference>
<dbReference type="InterPro" id="IPR004897">
    <property type="entry name" value="P/V_Pprotein_paramyxoviral"/>
</dbReference>
<dbReference type="InterPro" id="IPR028243">
    <property type="entry name" value="Paramyxo_P/V_N"/>
</dbReference>
<dbReference type="InterPro" id="IPR016075">
    <property type="entry name" value="RNA_pol_Pprot-P_XD_paramyxovir"/>
</dbReference>
<dbReference type="Pfam" id="PF03210">
    <property type="entry name" value="Paramyx_P_V_C"/>
    <property type="match status" value="1"/>
</dbReference>
<dbReference type="Pfam" id="PF13825">
    <property type="entry name" value="Paramyxo_P_V_N"/>
    <property type="match status" value="1"/>
</dbReference>
<dbReference type="SUPFAM" id="SSF101089">
    <property type="entry name" value="Phosphoprotein XD domain"/>
    <property type="match status" value="1"/>
</dbReference>
<comment type="function">
    <text evidence="2 4">Essential cofactor of the RNA polymerase L that plays a central role in the transcription and replication by forming the polymerase complex with RNA polymerase L and recruiting L to the genomic N-RNA template for RNA synthesis (By similarity). Also plays a central role in the encapsidation of nascent RNA chains by forming the encapsidation complex with the nucleocapsid protein N (N-P complex). Acts as a chaperone for newly synthesized free N protein, so-called N0, allowing encapsidation of nascent RNA chains during replication (By similarity). The nucleoprotein protein N prevents excessive phosphorylation of P, which leads to down-regulation of viral transcription/ replication. Participates, together with N, in the formation of viral factories (viroplasms), which are large inclusions in the host cytoplasm where replication takes place (By similarity).</text>
</comment>
<comment type="subunit">
    <text evidence="2 4 6">Homotetramer (By similarity). Interacts (via multimerization domain) with polymerase L; this interaction forms the polymerase L-P complex (By similarity). Interacts (via N-terminus) with N0 (via Ncore); this interaction allows P to chaperon N0 to avoid N polymerization before encapsidation (By similarity). Interacts (via C-terminus) with N-RNA template; this interaction positions the polymerase on the template for both transcription and replication (By similarity). Interacts with host ISG15; this interaction disrupts the activity of the N0-P complex (PubMed:36036587).</text>
</comment>
<comment type="domain">
    <text evidence="1 2 4">The N-terminus consists of a long intrinsically disordered tail. The central part contains the coiled-coil multimerization domain (PMD) (By similarity). Forms a four-stranded coiled coil structure (By similarity). The C-terminus constitutes the alpha-helical domain that binds to the nucleocapsid (N-RNA complex) (By similarity).</text>
</comment>
<comment type="PTM">
    <text evidence="4">Phosphorylation on serines by host CK2 is necessary for the formation of viral factories.</text>
</comment>
<comment type="RNA editing">
    <location>
        <position position="231" evidence="3"/>
    </location>
    <text evidence="3">Partially edited. RNA editing at this position consists of an insertion of one guanine nucleotide. The sequence displayed here is the P protein, derived from the unedited RNA. The edited RNA version gives rise to the V protein.</text>
</comment>
<comment type="similarity">
    <text evidence="7">Belongs to the morbillivirus P protein family.</text>
</comment>
<accession>Q91QS4</accession>
<organism>
    <name type="scientific">Peste-des-petits-ruminants virus</name>
    <name type="common">PPRV</name>
    <dbReference type="NCBI Taxonomy" id="2593991"/>
    <lineage>
        <taxon>Viruses</taxon>
        <taxon>Riboviria</taxon>
        <taxon>Orthornavirae</taxon>
        <taxon>Negarnaviricota</taxon>
        <taxon>Haploviricotina</taxon>
        <taxon>Monjiviricetes</taxon>
        <taxon>Mononegavirales</taxon>
        <taxon>Paramyxoviridae</taxon>
        <taxon>Orthoparamyxovirinae</taxon>
        <taxon>Morbillivirus</taxon>
        <taxon>Morbillivirus caprinae</taxon>
    </lineage>
</organism>
<name>PHOSP_PPRV</name>
<sequence>MAEEQAYHVNKGLECIKSLKASPPDLSTIKDALESWREGLSPSGRATPNPDTSEGDHQNINQSCSPAIGSDKVDMSPEDNLGFREITCNDSEAGLGGVLDKGSNSQVQRYYVYSHGGEEIEGLEDADSLVVQANPPVTDTFNGGEDGSDDSDVDSGPDDPGRDPLYDRGSAAGNDVSRSTDVEKLEGDDIQEVLNSQKSKGGRFQGGKILRVPEIPDVKNSRPSAQSIKKGTDGNSVLSGTVTECSSISGATQAVPESRWESSERNASVGSVPKSARSAKTIQGLTQESGTIASLTQPKENDSEFEYEDDLFTEMQEIRASIAKIHDDNKTILSKLDSLLLLKGEIDTIKKQISKQNISISTIEGHLSSIMIAIPGFGKDIKDPTSEVELNPDLRPIISRDSGRALAEVLKKPAVDRSQKSGIKVNSGSKGQLLKDLQLKPVDKQASSAIEFVPSDHESSRSVIRSIIKSSKLNIDHKDYLLDLLNDVKGSKDLKEFHKMLTAILAKQP</sequence>
<protein>
    <recommendedName>
        <fullName>Phosphoprotein</fullName>
    </recommendedName>
</protein>
<feature type="chain" id="PRO_0000459165" description="Phosphoprotein">
    <location>
        <begin position="1"/>
        <end position="509"/>
    </location>
</feature>
<feature type="region of interest" description="Disordered" evidence="5">
    <location>
        <begin position="33"/>
        <end position="84"/>
    </location>
</feature>
<feature type="region of interest" description="Disordered" evidence="5">
    <location>
        <begin position="131"/>
        <end position="236"/>
    </location>
</feature>
<feature type="region of interest" description="Disordered" evidence="5">
    <location>
        <begin position="256"/>
        <end position="281"/>
    </location>
</feature>
<feature type="region of interest" description="Multimerization" evidence="4">
    <location>
        <begin position="303"/>
        <end position="376"/>
    </location>
</feature>
<feature type="region of interest" description="Interaction with the nucleocapsid (N-RNA)" evidence="4">
    <location>
        <begin position="459"/>
        <end position="509"/>
    </location>
</feature>
<feature type="compositionally biased region" description="Polar residues" evidence="5">
    <location>
        <begin position="44"/>
        <end position="65"/>
    </location>
</feature>
<feature type="compositionally biased region" description="Acidic residues" evidence="5">
    <location>
        <begin position="146"/>
        <end position="157"/>
    </location>
</feature>
<feature type="compositionally biased region" description="Basic and acidic residues" evidence="5">
    <location>
        <begin position="178"/>
        <end position="187"/>
    </location>
</feature>
<feature type="compositionally biased region" description="Polar residues" evidence="5">
    <location>
        <begin position="221"/>
        <end position="236"/>
    </location>
</feature>
<feature type="modified residue" description="Phosphoserine" evidence="4">
    <location>
        <position position="151"/>
    </location>
</feature>
<feature type="helix" evidence="9">
    <location>
        <begin position="461"/>
        <end position="470"/>
    </location>
</feature>
<feature type="helix" evidence="9">
    <location>
        <begin position="475"/>
        <end position="486"/>
    </location>
</feature>
<feature type="helix" evidence="9">
    <location>
        <begin position="491"/>
        <end position="507"/>
    </location>
</feature>